<keyword id="KW-0963">Cytoplasm</keyword>
<keyword id="KW-0648">Protein biosynthesis</keyword>
<keyword id="KW-0663">Pyridoxal phosphate</keyword>
<keyword id="KW-1185">Reference proteome</keyword>
<keyword id="KW-0711">Selenium</keyword>
<keyword id="KW-0808">Transferase</keyword>
<evidence type="ECO:0000255" key="1">
    <source>
        <dbReference type="HAMAP-Rule" id="MF_00423"/>
    </source>
</evidence>
<sequence length="463" mass="50665">MTTETRSLYSQLPAIDRLLRDSSFLSLRDTYGHTRVVELLRQMLDEAREVIRDSQTLPAWCENWAQEVDARLTKEAQSALRPVINLTGTVLHTNLGRALQAEAAVEAVAQAMRSPVTLEYDLDDAGRGHRDRALAQLLCRITGAEDACIVNNNAAAVLLMLAATASGKEVVVSRGELVEIGGAFRIPDVMRQAGCTLHEVGTTNRTHANDYRQAVNENTALLMKVHTSNYSIQGFTKAIDEAELVALGKELDVPVVTDLGSGSLVDLSQYGLPKEPMPQELIAAGVSLVSFSGDKLLGGPQAGIIVGKKEMIARLQSHPLKRALRADKMTLAALEATLRLYLHPEALSEKLPTLRLLTRSAEVIQIQAQRLQAPLAAHYGAEFAVQVMPCLSQIGSGSLPVDRLPSAALTFTPHDGRGSHLESLAARWRELPVPVIGRIYDGRLWLDLRCLEDEQRFLEMLLK</sequence>
<reference key="1">
    <citation type="submission" date="2008-05" db="EMBL/GenBank/DDBJ databases">
        <title>Complete sequence of Shigella boydii serotype 18 strain BS512.</title>
        <authorList>
            <person name="Rasko D.A."/>
            <person name="Rosovitz M."/>
            <person name="Maurelli A.T."/>
            <person name="Myers G."/>
            <person name="Seshadri R."/>
            <person name="Cer R."/>
            <person name="Jiang L."/>
            <person name="Ravel J."/>
            <person name="Sebastian Y."/>
        </authorList>
    </citation>
    <scope>NUCLEOTIDE SEQUENCE [LARGE SCALE GENOMIC DNA]</scope>
    <source>
        <strain>CDC 3083-94 / BS512</strain>
    </source>
</reference>
<feature type="chain" id="PRO_1000124158" description="L-seryl-tRNA(Sec) selenium transferase">
    <location>
        <begin position="1"/>
        <end position="463"/>
    </location>
</feature>
<feature type="modified residue" description="N6-(pyridoxal phosphate)lysine" evidence="1">
    <location>
        <position position="295"/>
    </location>
</feature>
<comment type="function">
    <text evidence="1">Converts seryl-tRNA(Sec) to selenocysteinyl-tRNA(Sec) required for selenoprotein biosynthesis.</text>
</comment>
<comment type="catalytic activity">
    <reaction evidence="1">
        <text>L-seryl-tRNA(Sec) + selenophosphate + H(+) = L-selenocysteinyl-tRNA(Sec) + phosphate</text>
        <dbReference type="Rhea" id="RHEA:22728"/>
        <dbReference type="Rhea" id="RHEA-COMP:9742"/>
        <dbReference type="Rhea" id="RHEA-COMP:9743"/>
        <dbReference type="ChEBI" id="CHEBI:15378"/>
        <dbReference type="ChEBI" id="CHEBI:16144"/>
        <dbReference type="ChEBI" id="CHEBI:43474"/>
        <dbReference type="ChEBI" id="CHEBI:78533"/>
        <dbReference type="ChEBI" id="CHEBI:78573"/>
        <dbReference type="EC" id="2.9.1.1"/>
    </reaction>
</comment>
<comment type="cofactor">
    <cofactor evidence="1">
        <name>pyridoxal 5'-phosphate</name>
        <dbReference type="ChEBI" id="CHEBI:597326"/>
    </cofactor>
</comment>
<comment type="pathway">
    <text evidence="1">Aminoacyl-tRNA biosynthesis; selenocysteinyl-tRNA(Sec) biosynthesis; selenocysteinyl-tRNA(Sec) from L-seryl-tRNA(Sec) (bacterial route): step 1/1.</text>
</comment>
<comment type="subunit">
    <text evidence="1">Homodecamer; pentamer of dimers. Binds only one seryl-tRNA(Sec) per dimer.</text>
</comment>
<comment type="subcellular location">
    <subcellularLocation>
        <location evidence="1">Cytoplasm</location>
    </subcellularLocation>
</comment>
<comment type="similarity">
    <text evidence="1">Belongs to the SelA family.</text>
</comment>
<gene>
    <name evidence="1" type="primary">selA</name>
    <name type="ordered locus">SbBS512_E4006</name>
</gene>
<protein>
    <recommendedName>
        <fullName evidence="1">L-seryl-tRNA(Sec) selenium transferase</fullName>
        <ecNumber evidence="1">2.9.1.1</ecNumber>
    </recommendedName>
    <alternativeName>
        <fullName evidence="1">Selenocysteine synthase</fullName>
        <shortName evidence="1">Sec synthase</shortName>
    </alternativeName>
    <alternativeName>
        <fullName evidence="1">Selenocysteinyl-tRNA(Sec) synthase</fullName>
    </alternativeName>
</protein>
<name>SELA_SHIB3</name>
<accession>B2U5A3</accession>
<proteinExistence type="inferred from homology"/>
<dbReference type="EC" id="2.9.1.1" evidence="1"/>
<dbReference type="EMBL" id="CP001063">
    <property type="protein sequence ID" value="ACD07179.1"/>
    <property type="molecule type" value="Genomic_DNA"/>
</dbReference>
<dbReference type="RefSeq" id="WP_000206247.1">
    <property type="nucleotide sequence ID" value="NC_010658.1"/>
</dbReference>
<dbReference type="SMR" id="B2U5A3"/>
<dbReference type="STRING" id="344609.SbBS512_E4006"/>
<dbReference type="KEGG" id="sbc:SbBS512_E4006"/>
<dbReference type="HOGENOM" id="CLU_038142_1_0_6"/>
<dbReference type="UniPathway" id="UPA00906">
    <property type="reaction ID" value="UER00896"/>
</dbReference>
<dbReference type="Proteomes" id="UP000001030">
    <property type="component" value="Chromosome"/>
</dbReference>
<dbReference type="GO" id="GO:0005737">
    <property type="term" value="C:cytoplasm"/>
    <property type="evidence" value="ECO:0007669"/>
    <property type="project" value="UniProtKB-SubCell"/>
</dbReference>
<dbReference type="GO" id="GO:0004125">
    <property type="term" value="F:L-seryl-tRNA(Sec) selenium transferase activity"/>
    <property type="evidence" value="ECO:0007669"/>
    <property type="project" value="UniProtKB-UniRule"/>
</dbReference>
<dbReference type="GO" id="GO:0001717">
    <property type="term" value="P:conversion of seryl-tRNAsec to selenocys-tRNAsec"/>
    <property type="evidence" value="ECO:0007669"/>
    <property type="project" value="UniProtKB-UniRule"/>
</dbReference>
<dbReference type="GO" id="GO:0001514">
    <property type="term" value="P:selenocysteine incorporation"/>
    <property type="evidence" value="ECO:0007669"/>
    <property type="project" value="UniProtKB-UniRule"/>
</dbReference>
<dbReference type="FunFam" id="3.40.640.10:FF:000028">
    <property type="entry name" value="L-seryl-tRNA(Sec) selenium transferase"/>
    <property type="match status" value="1"/>
</dbReference>
<dbReference type="FunFam" id="3.90.1150.180:FF:000001">
    <property type="entry name" value="L-seryl-tRNA(Sec) selenium transferase"/>
    <property type="match status" value="1"/>
</dbReference>
<dbReference type="Gene3D" id="3.90.1150.180">
    <property type="match status" value="1"/>
</dbReference>
<dbReference type="Gene3D" id="3.40.640.10">
    <property type="entry name" value="Type I PLP-dependent aspartate aminotransferase-like (Major domain)"/>
    <property type="match status" value="1"/>
</dbReference>
<dbReference type="HAMAP" id="MF_00423">
    <property type="entry name" value="SelA"/>
    <property type="match status" value="1"/>
</dbReference>
<dbReference type="InterPro" id="IPR015424">
    <property type="entry name" value="PyrdxlP-dep_Trfase"/>
</dbReference>
<dbReference type="InterPro" id="IPR015421">
    <property type="entry name" value="PyrdxlP-dep_Trfase_major"/>
</dbReference>
<dbReference type="InterPro" id="IPR018319">
    <property type="entry name" value="SelA-like"/>
</dbReference>
<dbReference type="InterPro" id="IPR004534">
    <property type="entry name" value="SelA_trans"/>
</dbReference>
<dbReference type="InterPro" id="IPR025862">
    <property type="entry name" value="SelA_trans_N_dom"/>
</dbReference>
<dbReference type="NCBIfam" id="TIGR00474">
    <property type="entry name" value="selA"/>
    <property type="match status" value="1"/>
</dbReference>
<dbReference type="PANTHER" id="PTHR32328">
    <property type="entry name" value="L-SERYL-TRNA(SEC) SELENIUM TRANSFERASE"/>
    <property type="match status" value="1"/>
</dbReference>
<dbReference type="PANTHER" id="PTHR32328:SF0">
    <property type="entry name" value="L-SERYL-TRNA(SEC) SELENIUM TRANSFERASE"/>
    <property type="match status" value="1"/>
</dbReference>
<dbReference type="Pfam" id="PF12390">
    <property type="entry name" value="Se-cys_synth_N"/>
    <property type="match status" value="1"/>
</dbReference>
<dbReference type="Pfam" id="PF03841">
    <property type="entry name" value="SelA"/>
    <property type="match status" value="1"/>
</dbReference>
<dbReference type="SUPFAM" id="SSF53383">
    <property type="entry name" value="PLP-dependent transferases"/>
    <property type="match status" value="1"/>
</dbReference>
<organism>
    <name type="scientific">Shigella boydii serotype 18 (strain CDC 3083-94 / BS512)</name>
    <dbReference type="NCBI Taxonomy" id="344609"/>
    <lineage>
        <taxon>Bacteria</taxon>
        <taxon>Pseudomonadati</taxon>
        <taxon>Pseudomonadota</taxon>
        <taxon>Gammaproteobacteria</taxon>
        <taxon>Enterobacterales</taxon>
        <taxon>Enterobacteriaceae</taxon>
        <taxon>Shigella</taxon>
    </lineage>
</organism>